<sequence length="116" mass="13012">MTNKIIQQLEAEQMSKEIPTFAPGDTVVVQVKVKEGERSRLQAFEGVVIAKRNRGLNSAFTVRKISSGVGVERTFQTYSPQIDSLAVKRRGDVRKAKLYYLRDLSGKAARIKEKLS</sequence>
<reference key="1">
    <citation type="journal article" date="2002" name="Environ. Microbiol.">
        <title>Complete genome sequence and comparative analysis of the metabolically versatile Pseudomonas putida KT2440.</title>
        <authorList>
            <person name="Nelson K.E."/>
            <person name="Weinel C."/>
            <person name="Paulsen I.T."/>
            <person name="Dodson R.J."/>
            <person name="Hilbert H."/>
            <person name="Martins dos Santos V.A.P."/>
            <person name="Fouts D.E."/>
            <person name="Gill S.R."/>
            <person name="Pop M."/>
            <person name="Holmes M."/>
            <person name="Brinkac L.M."/>
            <person name="Beanan M.J."/>
            <person name="DeBoy R.T."/>
            <person name="Daugherty S.C."/>
            <person name="Kolonay J.F."/>
            <person name="Madupu R."/>
            <person name="Nelson W.C."/>
            <person name="White O."/>
            <person name="Peterson J.D."/>
            <person name="Khouri H.M."/>
            <person name="Hance I."/>
            <person name="Chris Lee P."/>
            <person name="Holtzapple E.K."/>
            <person name="Scanlan D."/>
            <person name="Tran K."/>
            <person name="Moazzez A."/>
            <person name="Utterback T.R."/>
            <person name="Rizzo M."/>
            <person name="Lee K."/>
            <person name="Kosack D."/>
            <person name="Moestl D."/>
            <person name="Wedler H."/>
            <person name="Lauber J."/>
            <person name="Stjepandic D."/>
            <person name="Hoheisel J."/>
            <person name="Straetz M."/>
            <person name="Heim S."/>
            <person name="Kiewitz C."/>
            <person name="Eisen J.A."/>
            <person name="Timmis K.N."/>
            <person name="Duesterhoeft A."/>
            <person name="Tuemmler B."/>
            <person name="Fraser C.M."/>
        </authorList>
    </citation>
    <scope>NUCLEOTIDE SEQUENCE [LARGE SCALE GENOMIC DNA]</scope>
    <source>
        <strain>ATCC 47054 / DSM 6125 / CFBP 8728 / NCIMB 11950 / KT2440</strain>
    </source>
</reference>
<organism>
    <name type="scientific">Pseudomonas putida (strain ATCC 47054 / DSM 6125 / CFBP 8728 / NCIMB 11950 / KT2440)</name>
    <dbReference type="NCBI Taxonomy" id="160488"/>
    <lineage>
        <taxon>Bacteria</taxon>
        <taxon>Pseudomonadati</taxon>
        <taxon>Pseudomonadota</taxon>
        <taxon>Gammaproteobacteria</taxon>
        <taxon>Pseudomonadales</taxon>
        <taxon>Pseudomonadaceae</taxon>
        <taxon>Pseudomonas</taxon>
    </lineage>
</organism>
<feature type="chain" id="PRO_0000163511" description="Large ribosomal subunit protein bL19">
    <location>
        <begin position="1"/>
        <end position="116"/>
    </location>
</feature>
<proteinExistence type="inferred from homology"/>
<name>RL19_PSEPK</name>
<protein>
    <recommendedName>
        <fullName evidence="1">Large ribosomal subunit protein bL19</fullName>
    </recommendedName>
    <alternativeName>
        <fullName evidence="2">50S ribosomal protein L19</fullName>
    </alternativeName>
</protein>
<accession>Q88MV3</accession>
<evidence type="ECO:0000255" key="1">
    <source>
        <dbReference type="HAMAP-Rule" id="MF_00402"/>
    </source>
</evidence>
<evidence type="ECO:0000305" key="2"/>
<comment type="function">
    <text evidence="1">This protein is located at the 30S-50S ribosomal subunit interface and may play a role in the structure and function of the aminoacyl-tRNA binding site.</text>
</comment>
<comment type="similarity">
    <text evidence="1">Belongs to the bacterial ribosomal protein bL19 family.</text>
</comment>
<keyword id="KW-1185">Reference proteome</keyword>
<keyword id="KW-0687">Ribonucleoprotein</keyword>
<keyword id="KW-0689">Ribosomal protein</keyword>
<gene>
    <name evidence="1" type="primary">rplS</name>
    <name type="ordered locus">PP_1465</name>
</gene>
<dbReference type="EMBL" id="AE015451">
    <property type="protein sequence ID" value="AAN67087.1"/>
    <property type="molecule type" value="Genomic_DNA"/>
</dbReference>
<dbReference type="RefSeq" id="NP_743623.1">
    <property type="nucleotide sequence ID" value="NC_002947.4"/>
</dbReference>
<dbReference type="RefSeq" id="WP_003252148.1">
    <property type="nucleotide sequence ID" value="NZ_CP169744.1"/>
</dbReference>
<dbReference type="SMR" id="Q88MV3"/>
<dbReference type="STRING" id="160488.PP_1465"/>
<dbReference type="PaxDb" id="160488-PP_1465"/>
<dbReference type="GeneID" id="97166584"/>
<dbReference type="KEGG" id="ppu:PP_1465"/>
<dbReference type="PATRIC" id="fig|160488.4.peg.1555"/>
<dbReference type="eggNOG" id="COG0335">
    <property type="taxonomic scope" value="Bacteria"/>
</dbReference>
<dbReference type="HOGENOM" id="CLU_103507_2_1_6"/>
<dbReference type="OrthoDB" id="9803541at2"/>
<dbReference type="PhylomeDB" id="Q88MV3"/>
<dbReference type="BioCyc" id="PPUT160488:G1G01-1557-MONOMER"/>
<dbReference type="Proteomes" id="UP000000556">
    <property type="component" value="Chromosome"/>
</dbReference>
<dbReference type="GO" id="GO:0022625">
    <property type="term" value="C:cytosolic large ribosomal subunit"/>
    <property type="evidence" value="ECO:0007669"/>
    <property type="project" value="TreeGrafter"/>
</dbReference>
<dbReference type="GO" id="GO:0003735">
    <property type="term" value="F:structural constituent of ribosome"/>
    <property type="evidence" value="ECO:0007669"/>
    <property type="project" value="InterPro"/>
</dbReference>
<dbReference type="GO" id="GO:0006412">
    <property type="term" value="P:translation"/>
    <property type="evidence" value="ECO:0007669"/>
    <property type="project" value="UniProtKB-UniRule"/>
</dbReference>
<dbReference type="FunFam" id="2.30.30.790:FF:000001">
    <property type="entry name" value="50S ribosomal protein L19"/>
    <property type="match status" value="1"/>
</dbReference>
<dbReference type="Gene3D" id="2.30.30.790">
    <property type="match status" value="1"/>
</dbReference>
<dbReference type="HAMAP" id="MF_00402">
    <property type="entry name" value="Ribosomal_bL19"/>
    <property type="match status" value="1"/>
</dbReference>
<dbReference type="InterPro" id="IPR001857">
    <property type="entry name" value="Ribosomal_bL19"/>
</dbReference>
<dbReference type="InterPro" id="IPR018257">
    <property type="entry name" value="Ribosomal_bL19_CS"/>
</dbReference>
<dbReference type="InterPro" id="IPR038657">
    <property type="entry name" value="Ribosomal_bL19_sf"/>
</dbReference>
<dbReference type="InterPro" id="IPR008991">
    <property type="entry name" value="Translation_prot_SH3-like_sf"/>
</dbReference>
<dbReference type="NCBIfam" id="TIGR01024">
    <property type="entry name" value="rplS_bact"/>
    <property type="match status" value="1"/>
</dbReference>
<dbReference type="PANTHER" id="PTHR15680:SF9">
    <property type="entry name" value="LARGE RIBOSOMAL SUBUNIT PROTEIN BL19M"/>
    <property type="match status" value="1"/>
</dbReference>
<dbReference type="PANTHER" id="PTHR15680">
    <property type="entry name" value="RIBOSOMAL PROTEIN L19"/>
    <property type="match status" value="1"/>
</dbReference>
<dbReference type="Pfam" id="PF01245">
    <property type="entry name" value="Ribosomal_L19"/>
    <property type="match status" value="1"/>
</dbReference>
<dbReference type="PIRSF" id="PIRSF002191">
    <property type="entry name" value="Ribosomal_L19"/>
    <property type="match status" value="1"/>
</dbReference>
<dbReference type="PRINTS" id="PR00061">
    <property type="entry name" value="RIBOSOMALL19"/>
</dbReference>
<dbReference type="SUPFAM" id="SSF50104">
    <property type="entry name" value="Translation proteins SH3-like domain"/>
    <property type="match status" value="1"/>
</dbReference>
<dbReference type="PROSITE" id="PS01015">
    <property type="entry name" value="RIBOSOMAL_L19"/>
    <property type="match status" value="1"/>
</dbReference>